<sequence>MSTIGAVDILNQKTITSEVAASVTSKYLQSTFSKGNTSHIEDKRFIHVSSRSHSRFTSTPITPNEILSLKFHVSGSSMAYSRMDGSLTVWFIKDASFDKSVEVYIPDCCGSDKLATDLSWNPTSLNQIAVVSNSSEISLLLINEKSLTASKLRTLSLGSKTKVNTCLYDPLGNWLLAATKSEKIYLFDVKKDHSSVCSLNISDISQEDNDVVYSLAWSNGGSHIFIGFKSGYLAILKAKHGILEVCTKIKAHTGPITEIKMDPWGRNFITGSIDGNCYVWNMKSLCCELIINDLNSAVTTLDVCHLGKILGICTEDEMVYFYDLNSGNLLHSKSLANYKTDPVLKFYPDKSWYIMSGKNDTLSNHFVKNEKNLITYWKDMFDNTMIEKRRKNNGGGNNHNKRTSKNTDRIGKDRPSRFNSKK</sequence>
<protein>
    <recommendedName>
        <fullName>Protein TEX1</fullName>
    </recommendedName>
    <alternativeName>
        <fullName>Trex component 1</fullName>
    </alternativeName>
</protein>
<evidence type="ECO:0000256" key="1">
    <source>
        <dbReference type="SAM" id="MobiDB-lite"/>
    </source>
</evidence>
<evidence type="ECO:0000269" key="2">
    <source>
    </source>
</evidence>
<evidence type="ECO:0000305" key="3"/>
<evidence type="ECO:0007829" key="4">
    <source>
        <dbReference type="PDB" id="7APX"/>
    </source>
</evidence>
<evidence type="ECO:0007829" key="5">
    <source>
        <dbReference type="PDB" id="7V2W"/>
    </source>
</evidence>
<evidence type="ECO:0007829" key="6">
    <source>
        <dbReference type="PDB" id="7V2Y"/>
    </source>
</evidence>
<comment type="function">
    <text>Component of the TREX complex, which operates in coupling transcription elongation to mRNA export.</text>
</comment>
<comment type="subunit">
    <text evidence="2">Component of the transcription/export (TREX) complex and the THO complex.</text>
</comment>
<comment type="interaction">
    <interactant intactId="EBI-29234">
        <id>P53851</id>
    </interactant>
    <interactant intactId="EBI-15475">
        <id>P53552</id>
        <label>THO2</label>
    </interactant>
    <organismsDiffer>false</organismsDiffer>
    <experiments>3</experiments>
</comment>
<comment type="subcellular location">
    <subcellularLocation>
        <location evidence="3">Nucleus</location>
    </subcellularLocation>
</comment>
<comment type="similarity">
    <text evidence="3">Belongs to the THOC3 family.</text>
</comment>
<accession>P53851</accession>
<accession>D6W0U0</accession>
<organism>
    <name type="scientific">Saccharomyces cerevisiae (strain ATCC 204508 / S288c)</name>
    <name type="common">Baker's yeast</name>
    <dbReference type="NCBI Taxonomy" id="559292"/>
    <lineage>
        <taxon>Eukaryota</taxon>
        <taxon>Fungi</taxon>
        <taxon>Dikarya</taxon>
        <taxon>Ascomycota</taxon>
        <taxon>Saccharomycotina</taxon>
        <taxon>Saccharomycetes</taxon>
        <taxon>Saccharomycetales</taxon>
        <taxon>Saccharomycetaceae</taxon>
        <taxon>Saccharomyces</taxon>
    </lineage>
</organism>
<dbReference type="EMBL" id="Z71529">
    <property type="protein sequence ID" value="CAA96160.1"/>
    <property type="molecule type" value="Genomic_DNA"/>
</dbReference>
<dbReference type="EMBL" id="X96722">
    <property type="protein sequence ID" value="CAA65491.1"/>
    <property type="molecule type" value="Genomic_DNA"/>
</dbReference>
<dbReference type="EMBL" id="AY558028">
    <property type="protein sequence ID" value="AAS56354.1"/>
    <property type="molecule type" value="Genomic_DNA"/>
</dbReference>
<dbReference type="EMBL" id="BK006947">
    <property type="protein sequence ID" value="DAA10306.1"/>
    <property type="molecule type" value="Genomic_DNA"/>
</dbReference>
<dbReference type="PIR" id="S63226">
    <property type="entry name" value="S63226"/>
</dbReference>
<dbReference type="RefSeq" id="NP_014146.1">
    <property type="nucleotide sequence ID" value="NM_001183091.1"/>
</dbReference>
<dbReference type="PDB" id="7APX">
    <property type="method" value="EM"/>
    <property type="resolution" value="3.40 A"/>
    <property type="chains" value="E=1-380"/>
</dbReference>
<dbReference type="PDB" id="7AQO">
    <property type="method" value="EM"/>
    <property type="resolution" value="4.50 A"/>
    <property type="chains" value="E/K=1-380"/>
</dbReference>
<dbReference type="PDB" id="7V2W">
    <property type="method" value="EM"/>
    <property type="resolution" value="3.20 A"/>
    <property type="chains" value="H=1-422"/>
</dbReference>
<dbReference type="PDB" id="7V2Y">
    <property type="method" value="EM"/>
    <property type="resolution" value="3.40 A"/>
    <property type="chains" value="C=1-422"/>
</dbReference>
<dbReference type="PDBsum" id="7APX"/>
<dbReference type="PDBsum" id="7AQO"/>
<dbReference type="PDBsum" id="7V2W"/>
<dbReference type="PDBsum" id="7V2Y"/>
<dbReference type="EMDB" id="EMD-11859"/>
<dbReference type="EMDB" id="EMD-16841"/>
<dbReference type="EMDB" id="EMD-31669"/>
<dbReference type="EMDB" id="EMD-31670"/>
<dbReference type="SMR" id="P53851"/>
<dbReference type="BioGRID" id="35586">
    <property type="interactions" value="78"/>
</dbReference>
<dbReference type="ComplexPortal" id="CPX-1792">
    <property type="entry name" value="THO complex"/>
</dbReference>
<dbReference type="ComplexPortal" id="CPX-1793">
    <property type="entry name" value="TREX complex"/>
</dbReference>
<dbReference type="DIP" id="DIP-2820N"/>
<dbReference type="FunCoup" id="P53851">
    <property type="interactions" value="908"/>
</dbReference>
<dbReference type="IntAct" id="P53851">
    <property type="interactions" value="10"/>
</dbReference>
<dbReference type="MINT" id="P53851"/>
<dbReference type="STRING" id="4932.YNL253W"/>
<dbReference type="CarbonylDB" id="P53851"/>
<dbReference type="iPTMnet" id="P53851"/>
<dbReference type="PaxDb" id="4932-YNL253W"/>
<dbReference type="PeptideAtlas" id="P53851"/>
<dbReference type="EnsemblFungi" id="YNL253W_mRNA">
    <property type="protein sequence ID" value="YNL253W"/>
    <property type="gene ID" value="YNL253W"/>
</dbReference>
<dbReference type="GeneID" id="855468"/>
<dbReference type="KEGG" id="sce:YNL253W"/>
<dbReference type="AGR" id="SGD:S000005197"/>
<dbReference type="SGD" id="S000005197">
    <property type="gene designation" value="TEX1"/>
</dbReference>
<dbReference type="VEuPathDB" id="FungiDB:YNL253W"/>
<dbReference type="eggNOG" id="KOG4155">
    <property type="taxonomic scope" value="Eukaryota"/>
</dbReference>
<dbReference type="HOGENOM" id="CLU_041466_0_0_1"/>
<dbReference type="InParanoid" id="P53851"/>
<dbReference type="OMA" id="WNADGRH"/>
<dbReference type="OrthoDB" id="340259at2759"/>
<dbReference type="BioCyc" id="YEAST:G3O-33250-MONOMER"/>
<dbReference type="BioGRID-ORCS" id="855468">
    <property type="hits" value="0 hits in 10 CRISPR screens"/>
</dbReference>
<dbReference type="PRO" id="PR:P53851"/>
<dbReference type="Proteomes" id="UP000002311">
    <property type="component" value="Chromosome XIV"/>
</dbReference>
<dbReference type="RNAct" id="P53851">
    <property type="molecule type" value="protein"/>
</dbReference>
<dbReference type="GO" id="GO:0000347">
    <property type="term" value="C:THO complex"/>
    <property type="evidence" value="ECO:0000353"/>
    <property type="project" value="ComplexPortal"/>
</dbReference>
<dbReference type="GO" id="GO:0000445">
    <property type="term" value="C:THO complex part of transcription export complex"/>
    <property type="evidence" value="ECO:0000318"/>
    <property type="project" value="GO_Central"/>
</dbReference>
<dbReference type="GO" id="GO:0000346">
    <property type="term" value="C:transcription export complex"/>
    <property type="evidence" value="ECO:0000314"/>
    <property type="project" value="SGD"/>
</dbReference>
<dbReference type="GO" id="GO:0003729">
    <property type="term" value="F:mRNA binding"/>
    <property type="evidence" value="ECO:0007005"/>
    <property type="project" value="SGD"/>
</dbReference>
<dbReference type="GO" id="GO:0006406">
    <property type="term" value="P:mRNA export from nucleus"/>
    <property type="evidence" value="ECO:0000318"/>
    <property type="project" value="GO_Central"/>
</dbReference>
<dbReference type="GO" id="GO:0006368">
    <property type="term" value="P:transcription elongation by RNA polymerase II"/>
    <property type="evidence" value="ECO:0000303"/>
    <property type="project" value="ComplexPortal"/>
</dbReference>
<dbReference type="FunFam" id="2.130.10.10:FF:001363">
    <property type="entry name" value="Tex1p"/>
    <property type="match status" value="1"/>
</dbReference>
<dbReference type="Gene3D" id="2.130.10.10">
    <property type="entry name" value="YVTN repeat-like/Quinoprotein amine dehydrogenase"/>
    <property type="match status" value="2"/>
</dbReference>
<dbReference type="InterPro" id="IPR040132">
    <property type="entry name" value="Tex1/THOC3"/>
</dbReference>
<dbReference type="InterPro" id="IPR015943">
    <property type="entry name" value="WD40/YVTN_repeat-like_dom_sf"/>
</dbReference>
<dbReference type="InterPro" id="IPR036322">
    <property type="entry name" value="WD40_repeat_dom_sf"/>
</dbReference>
<dbReference type="InterPro" id="IPR001680">
    <property type="entry name" value="WD40_rpt"/>
</dbReference>
<dbReference type="PANTHER" id="PTHR22839:SF0">
    <property type="entry name" value="THO COMPLEX SUBUNIT 3"/>
    <property type="match status" value="1"/>
</dbReference>
<dbReference type="PANTHER" id="PTHR22839">
    <property type="entry name" value="THO COMPLEX SUBUNIT 3 THO3"/>
    <property type="match status" value="1"/>
</dbReference>
<dbReference type="Pfam" id="PF00400">
    <property type="entry name" value="WD40"/>
    <property type="match status" value="1"/>
</dbReference>
<dbReference type="SMART" id="SM00320">
    <property type="entry name" value="WD40"/>
    <property type="match status" value="5"/>
</dbReference>
<dbReference type="SUPFAM" id="SSF50978">
    <property type="entry name" value="WD40 repeat-like"/>
    <property type="match status" value="1"/>
</dbReference>
<dbReference type="PROSITE" id="PS50082">
    <property type="entry name" value="WD_REPEATS_2"/>
    <property type="match status" value="1"/>
</dbReference>
<dbReference type="PROSITE" id="PS50294">
    <property type="entry name" value="WD_REPEATS_REGION"/>
    <property type="match status" value="1"/>
</dbReference>
<feature type="chain" id="PRO_0000051482" description="Protein TEX1">
    <location>
        <begin position="1"/>
        <end position="422"/>
    </location>
</feature>
<feature type="repeat" description="WD 1">
    <location>
        <begin position="61"/>
        <end position="100"/>
    </location>
</feature>
<feature type="repeat" description="WD 2">
    <location>
        <begin position="158"/>
        <end position="197"/>
    </location>
</feature>
<feature type="repeat" description="WD 3">
    <location>
        <begin position="207"/>
        <end position="246"/>
    </location>
</feature>
<feature type="repeat" description="WD 4">
    <location>
        <begin position="251"/>
        <end position="290"/>
    </location>
</feature>
<feature type="repeat" description="WD 5">
    <location>
        <begin position="293"/>
        <end position="332"/>
    </location>
</feature>
<feature type="region of interest" description="Disordered" evidence="1">
    <location>
        <begin position="388"/>
        <end position="422"/>
    </location>
</feature>
<feature type="compositionally biased region" description="Basic and acidic residues" evidence="1">
    <location>
        <begin position="405"/>
        <end position="416"/>
    </location>
</feature>
<feature type="helix" evidence="5">
    <location>
        <begin position="8"/>
        <end position="11"/>
    </location>
</feature>
<feature type="helix" evidence="5">
    <location>
        <begin position="17"/>
        <end position="27"/>
    </location>
</feature>
<feature type="strand" evidence="5">
    <location>
        <begin position="30"/>
        <end position="34"/>
    </location>
</feature>
<feature type="strand" evidence="5">
    <location>
        <begin position="37"/>
        <end position="39"/>
    </location>
</feature>
<feature type="helix" evidence="5">
    <location>
        <begin position="44"/>
        <end position="53"/>
    </location>
</feature>
<feature type="strand" evidence="5">
    <location>
        <begin position="66"/>
        <end position="71"/>
    </location>
</feature>
<feature type="strand" evidence="5">
    <location>
        <begin position="77"/>
        <end position="85"/>
    </location>
</feature>
<feature type="strand" evidence="5">
    <location>
        <begin position="87"/>
        <end position="91"/>
    </location>
</feature>
<feature type="strand" evidence="5">
    <location>
        <begin position="93"/>
        <end position="97"/>
    </location>
</feature>
<feature type="strand" evidence="5">
    <location>
        <begin position="99"/>
        <end position="109"/>
    </location>
</feature>
<feature type="strand" evidence="5">
    <location>
        <begin position="111"/>
        <end position="113"/>
    </location>
</feature>
<feature type="strand" evidence="4">
    <location>
        <begin position="117"/>
        <end position="119"/>
    </location>
</feature>
<feature type="strand" evidence="5">
    <location>
        <begin position="122"/>
        <end position="126"/>
    </location>
</feature>
<feature type="strand" evidence="5">
    <location>
        <begin position="128"/>
        <end position="131"/>
    </location>
</feature>
<feature type="strand" evidence="5">
    <location>
        <begin position="133"/>
        <end position="135"/>
    </location>
</feature>
<feature type="strand" evidence="5">
    <location>
        <begin position="137"/>
        <end position="142"/>
    </location>
</feature>
<feature type="strand" evidence="5">
    <location>
        <begin position="144"/>
        <end position="147"/>
    </location>
</feature>
<feature type="strand" evidence="5">
    <location>
        <begin position="149"/>
        <end position="155"/>
    </location>
</feature>
<feature type="strand" evidence="5">
    <location>
        <begin position="165"/>
        <end position="168"/>
    </location>
</feature>
<feature type="strand" evidence="6">
    <location>
        <begin position="170"/>
        <end position="172"/>
    </location>
</feature>
<feature type="strand" evidence="5">
    <location>
        <begin position="174"/>
        <end position="178"/>
    </location>
</feature>
<feature type="strand" evidence="5">
    <location>
        <begin position="180"/>
        <end position="191"/>
    </location>
</feature>
<feature type="strand" evidence="5">
    <location>
        <begin position="195"/>
        <end position="200"/>
    </location>
</feature>
<feature type="helix" evidence="5">
    <location>
        <begin position="201"/>
        <end position="204"/>
    </location>
</feature>
<feature type="strand" evidence="4">
    <location>
        <begin position="207"/>
        <end position="209"/>
    </location>
</feature>
<feature type="strand" evidence="5">
    <location>
        <begin position="214"/>
        <end position="217"/>
    </location>
</feature>
<feature type="strand" evidence="5">
    <location>
        <begin position="219"/>
        <end position="227"/>
    </location>
</feature>
<feature type="strand" evidence="5">
    <location>
        <begin position="229"/>
        <end position="237"/>
    </location>
</feature>
<feature type="strand" evidence="5">
    <location>
        <begin position="239"/>
        <end position="241"/>
    </location>
</feature>
<feature type="strand" evidence="5">
    <location>
        <begin position="245"/>
        <end position="250"/>
    </location>
</feature>
<feature type="strand" evidence="5">
    <location>
        <begin position="256"/>
        <end position="261"/>
    </location>
</feature>
<feature type="strand" evidence="5">
    <location>
        <begin position="265"/>
        <end position="281"/>
    </location>
</feature>
<feature type="turn" evidence="5">
    <location>
        <begin position="282"/>
        <end position="284"/>
    </location>
</feature>
<feature type="strand" evidence="5">
    <location>
        <begin position="287"/>
        <end position="292"/>
    </location>
</feature>
<feature type="strand" evidence="5">
    <location>
        <begin position="298"/>
        <end position="303"/>
    </location>
</feature>
<feature type="strand" evidence="5">
    <location>
        <begin position="305"/>
        <end position="307"/>
    </location>
</feature>
<feature type="strand" evidence="5">
    <location>
        <begin position="309"/>
        <end position="314"/>
    </location>
</feature>
<feature type="strand" evidence="5">
    <location>
        <begin position="317"/>
        <end position="326"/>
    </location>
</feature>
<feature type="strand" evidence="5">
    <location>
        <begin position="329"/>
        <end position="334"/>
    </location>
</feature>
<feature type="strand" evidence="4">
    <location>
        <begin position="337"/>
        <end position="341"/>
    </location>
</feature>
<feature type="strand" evidence="4">
    <location>
        <begin position="344"/>
        <end position="346"/>
    </location>
</feature>
<feature type="strand" evidence="5">
    <location>
        <begin position="348"/>
        <end position="351"/>
    </location>
</feature>
<feature type="strand" evidence="4">
    <location>
        <begin position="353"/>
        <end position="356"/>
    </location>
</feature>
<feature type="strand" evidence="5">
    <location>
        <begin position="358"/>
        <end position="361"/>
    </location>
</feature>
<feature type="strand" evidence="5">
    <location>
        <begin position="363"/>
        <end position="366"/>
    </location>
</feature>
<feature type="strand" evidence="5">
    <location>
        <begin position="369"/>
        <end position="373"/>
    </location>
</feature>
<feature type="helix" evidence="5">
    <location>
        <begin position="374"/>
        <end position="388"/>
    </location>
</feature>
<keyword id="KW-0002">3D-structure</keyword>
<keyword id="KW-0539">Nucleus</keyword>
<keyword id="KW-1185">Reference proteome</keyword>
<keyword id="KW-0677">Repeat</keyword>
<keyword id="KW-0804">Transcription</keyword>
<keyword id="KW-0805">Transcription regulation</keyword>
<keyword id="KW-0853">WD repeat</keyword>
<name>TEX1_YEAST</name>
<proteinExistence type="evidence at protein level"/>
<gene>
    <name type="primary">TEX1</name>
    <name type="ordered locus">YNL253W</name>
    <name type="ORF">N0860</name>
</gene>
<reference key="1">
    <citation type="journal article" date="1997" name="Yeast">
        <title>Sequence analysis of the 33 kb long region between ORC5 and SUI1 from the left arm of chromosome XIV from Saccharomyces cerevisiae.</title>
        <authorList>
            <person name="Sen-Gupta M."/>
            <person name="Gueldener U."/>
            <person name="Beinhauer J.D."/>
            <person name="Fiedler T.A."/>
            <person name="Hegemann J.H."/>
        </authorList>
    </citation>
    <scope>NUCLEOTIDE SEQUENCE [GENOMIC DNA]</scope>
    <source>
        <strain>ATCC 96604 / S288c / FY1679</strain>
    </source>
</reference>
<reference key="2">
    <citation type="journal article" date="1997" name="Nature">
        <title>The nucleotide sequence of Saccharomyces cerevisiae chromosome XIV and its evolutionary implications.</title>
        <authorList>
            <person name="Philippsen P."/>
            <person name="Kleine K."/>
            <person name="Poehlmann R."/>
            <person name="Duesterhoeft A."/>
            <person name="Hamberg K."/>
            <person name="Hegemann J.H."/>
            <person name="Obermaier B."/>
            <person name="Urrestarazu L.A."/>
            <person name="Aert R."/>
            <person name="Albermann K."/>
            <person name="Altmann R."/>
            <person name="Andre B."/>
            <person name="Baladron V."/>
            <person name="Ballesta J.P.G."/>
            <person name="Becam A.-M."/>
            <person name="Beinhauer J.D."/>
            <person name="Boskovic J."/>
            <person name="Buitrago M.J."/>
            <person name="Bussereau F."/>
            <person name="Coster F."/>
            <person name="Crouzet M."/>
            <person name="D'Angelo M."/>
            <person name="Dal Pero F."/>
            <person name="De Antoni A."/>
            <person name="del Rey F."/>
            <person name="Doignon F."/>
            <person name="Domdey H."/>
            <person name="Dubois E."/>
            <person name="Fiedler T.A."/>
            <person name="Fleig U."/>
            <person name="Floeth M."/>
            <person name="Fritz C."/>
            <person name="Gaillardin C."/>
            <person name="Garcia-Cantalejo J.M."/>
            <person name="Glansdorff N."/>
            <person name="Goffeau A."/>
            <person name="Gueldener U."/>
            <person name="Herbert C.J."/>
            <person name="Heumann K."/>
            <person name="Heuss-Neitzel D."/>
            <person name="Hilbert H."/>
            <person name="Hinni K."/>
            <person name="Iraqui Houssaini I."/>
            <person name="Jacquet M."/>
            <person name="Jimenez A."/>
            <person name="Jonniaux J.-L."/>
            <person name="Karpfinger-Hartl L."/>
            <person name="Lanfranchi G."/>
            <person name="Lepingle A."/>
            <person name="Levesque H."/>
            <person name="Lyck R."/>
            <person name="Maftahi M."/>
            <person name="Mallet L."/>
            <person name="Maurer C.T.C."/>
            <person name="Messenguy F."/>
            <person name="Mewes H.-W."/>
            <person name="Moestl D."/>
            <person name="Nasr F."/>
            <person name="Nicaud J.-M."/>
            <person name="Niedenthal R.K."/>
            <person name="Pandolfo D."/>
            <person name="Pierard A."/>
            <person name="Piravandi E."/>
            <person name="Planta R.J."/>
            <person name="Pohl T.M."/>
            <person name="Purnelle B."/>
            <person name="Rebischung C."/>
            <person name="Remacha M.A."/>
            <person name="Revuelta J.L."/>
            <person name="Rinke M."/>
            <person name="Saiz J.E."/>
            <person name="Sartorello F."/>
            <person name="Scherens B."/>
            <person name="Sen-Gupta M."/>
            <person name="Soler-Mira A."/>
            <person name="Urbanus J.H.M."/>
            <person name="Valle G."/>
            <person name="Van Dyck L."/>
            <person name="Verhasselt P."/>
            <person name="Vierendeels F."/>
            <person name="Vissers S."/>
            <person name="Voet M."/>
            <person name="Volckaert G."/>
            <person name="Wach A."/>
            <person name="Wambutt R."/>
            <person name="Wedler H."/>
            <person name="Zollner A."/>
            <person name="Hani J."/>
        </authorList>
    </citation>
    <scope>NUCLEOTIDE SEQUENCE [LARGE SCALE GENOMIC DNA]</scope>
    <source>
        <strain>ATCC 204508 / S288c</strain>
    </source>
</reference>
<reference key="3">
    <citation type="journal article" date="2014" name="G3 (Bethesda)">
        <title>The reference genome sequence of Saccharomyces cerevisiae: Then and now.</title>
        <authorList>
            <person name="Engel S.R."/>
            <person name="Dietrich F.S."/>
            <person name="Fisk D.G."/>
            <person name="Binkley G."/>
            <person name="Balakrishnan R."/>
            <person name="Costanzo M.C."/>
            <person name="Dwight S.S."/>
            <person name="Hitz B.C."/>
            <person name="Karra K."/>
            <person name="Nash R.S."/>
            <person name="Weng S."/>
            <person name="Wong E.D."/>
            <person name="Lloyd P."/>
            <person name="Skrzypek M.S."/>
            <person name="Miyasato S.R."/>
            <person name="Simison M."/>
            <person name="Cherry J.M."/>
        </authorList>
    </citation>
    <scope>GENOME REANNOTATION</scope>
    <source>
        <strain>ATCC 204508 / S288c</strain>
    </source>
</reference>
<reference key="4">
    <citation type="journal article" date="2007" name="Genome Res.">
        <title>Approaching a complete repository of sequence-verified protein-encoding clones for Saccharomyces cerevisiae.</title>
        <authorList>
            <person name="Hu Y."/>
            <person name="Rolfs A."/>
            <person name="Bhullar B."/>
            <person name="Murthy T.V.S."/>
            <person name="Zhu C."/>
            <person name="Berger M.F."/>
            <person name="Camargo A.A."/>
            <person name="Kelley F."/>
            <person name="McCarron S."/>
            <person name="Jepson D."/>
            <person name="Richardson A."/>
            <person name="Raphael J."/>
            <person name="Moreira D."/>
            <person name="Taycher E."/>
            <person name="Zuo D."/>
            <person name="Mohr S."/>
            <person name="Kane M.F."/>
            <person name="Williamson J."/>
            <person name="Simpson A.J.G."/>
            <person name="Bulyk M.L."/>
            <person name="Harlow E."/>
            <person name="Marsischky G."/>
            <person name="Kolodner R.D."/>
            <person name="LaBaer J."/>
        </authorList>
    </citation>
    <scope>NUCLEOTIDE SEQUENCE [GENOMIC DNA]</scope>
    <source>
        <strain>ATCC 204508 / S288c</strain>
    </source>
</reference>
<reference key="5">
    <citation type="journal article" date="2002" name="Nature">
        <title>TREX is a conserved complex coupling transcription with messenger RNA export.</title>
        <authorList>
            <person name="Straesser K."/>
            <person name="Masuda S."/>
            <person name="Mason P."/>
            <person name="Pfannstiel J."/>
            <person name="Oppizzi M."/>
            <person name="Rodriguez-Navarro S."/>
            <person name="Rondon A.G."/>
            <person name="Aguilera A."/>
            <person name="Struhl K."/>
            <person name="Reed R."/>
            <person name="Hurt E."/>
        </authorList>
    </citation>
    <scope>IDENTIFICATION IN TREX COMPLEX</scope>
    <scope>IDENTIFICATION BY MASS SPECTROMETRY</scope>
</reference>